<feature type="chain" id="PRO_0000225780" description="Large ribosomal subunit protein bL32">
    <location>
        <begin position="1"/>
        <end position="55"/>
    </location>
</feature>
<feature type="region of interest" description="Disordered" evidence="2">
    <location>
        <begin position="1"/>
        <end position="27"/>
    </location>
</feature>
<organism>
    <name type="scientific">Yersinia pseudotuberculosis serotype I (strain IP32953)</name>
    <dbReference type="NCBI Taxonomy" id="273123"/>
    <lineage>
        <taxon>Bacteria</taxon>
        <taxon>Pseudomonadati</taxon>
        <taxon>Pseudomonadota</taxon>
        <taxon>Gammaproteobacteria</taxon>
        <taxon>Enterobacterales</taxon>
        <taxon>Yersiniaceae</taxon>
        <taxon>Yersinia</taxon>
    </lineage>
</organism>
<protein>
    <recommendedName>
        <fullName evidence="1">Large ribosomal subunit protein bL32</fullName>
    </recommendedName>
    <alternativeName>
        <fullName evidence="3">50S ribosomal protein L32</fullName>
    </alternativeName>
</protein>
<comment type="similarity">
    <text evidence="1">Belongs to the bacterial ribosomal protein bL32 family.</text>
</comment>
<accession>Q669K9</accession>
<name>RL32_YERPS</name>
<dbReference type="EMBL" id="BX936398">
    <property type="protein sequence ID" value="CAH21713.1"/>
    <property type="molecule type" value="Genomic_DNA"/>
</dbReference>
<dbReference type="RefSeq" id="WP_002210931.1">
    <property type="nucleotide sequence ID" value="NZ_CP009712.1"/>
</dbReference>
<dbReference type="SMR" id="Q669K9"/>
<dbReference type="GeneID" id="97455787"/>
<dbReference type="KEGG" id="ypo:BZ17_4161"/>
<dbReference type="KEGG" id="yps:YPTB2475"/>
<dbReference type="PATRIC" id="fig|273123.14.peg.4384"/>
<dbReference type="Proteomes" id="UP000001011">
    <property type="component" value="Chromosome"/>
</dbReference>
<dbReference type="GO" id="GO:0015934">
    <property type="term" value="C:large ribosomal subunit"/>
    <property type="evidence" value="ECO:0007669"/>
    <property type="project" value="InterPro"/>
</dbReference>
<dbReference type="GO" id="GO:0003735">
    <property type="term" value="F:structural constituent of ribosome"/>
    <property type="evidence" value="ECO:0007669"/>
    <property type="project" value="InterPro"/>
</dbReference>
<dbReference type="GO" id="GO:0006412">
    <property type="term" value="P:translation"/>
    <property type="evidence" value="ECO:0007669"/>
    <property type="project" value="UniProtKB-UniRule"/>
</dbReference>
<dbReference type="HAMAP" id="MF_00340">
    <property type="entry name" value="Ribosomal_bL32"/>
    <property type="match status" value="1"/>
</dbReference>
<dbReference type="InterPro" id="IPR002677">
    <property type="entry name" value="Ribosomal_bL32"/>
</dbReference>
<dbReference type="InterPro" id="IPR044957">
    <property type="entry name" value="Ribosomal_bL32_bact"/>
</dbReference>
<dbReference type="InterPro" id="IPR011332">
    <property type="entry name" value="Ribosomal_zn-bd"/>
</dbReference>
<dbReference type="NCBIfam" id="TIGR01031">
    <property type="entry name" value="rpmF_bact"/>
    <property type="match status" value="1"/>
</dbReference>
<dbReference type="PANTHER" id="PTHR35534">
    <property type="entry name" value="50S RIBOSOMAL PROTEIN L32"/>
    <property type="match status" value="1"/>
</dbReference>
<dbReference type="PANTHER" id="PTHR35534:SF1">
    <property type="entry name" value="LARGE RIBOSOMAL SUBUNIT PROTEIN BL32"/>
    <property type="match status" value="1"/>
</dbReference>
<dbReference type="Pfam" id="PF01783">
    <property type="entry name" value="Ribosomal_L32p"/>
    <property type="match status" value="1"/>
</dbReference>
<dbReference type="SUPFAM" id="SSF57829">
    <property type="entry name" value="Zn-binding ribosomal proteins"/>
    <property type="match status" value="1"/>
</dbReference>
<keyword id="KW-0687">Ribonucleoprotein</keyword>
<keyword id="KW-0689">Ribosomal protein</keyword>
<evidence type="ECO:0000255" key="1">
    <source>
        <dbReference type="HAMAP-Rule" id="MF_00340"/>
    </source>
</evidence>
<evidence type="ECO:0000256" key="2">
    <source>
        <dbReference type="SAM" id="MobiDB-lite"/>
    </source>
</evidence>
<evidence type="ECO:0000305" key="3"/>
<reference key="1">
    <citation type="journal article" date="2004" name="Proc. Natl. Acad. Sci. U.S.A.">
        <title>Insights into the evolution of Yersinia pestis through whole-genome comparison with Yersinia pseudotuberculosis.</title>
        <authorList>
            <person name="Chain P.S.G."/>
            <person name="Carniel E."/>
            <person name="Larimer F.W."/>
            <person name="Lamerdin J."/>
            <person name="Stoutland P.O."/>
            <person name="Regala W.M."/>
            <person name="Georgescu A.M."/>
            <person name="Vergez L.M."/>
            <person name="Land M.L."/>
            <person name="Motin V.L."/>
            <person name="Brubaker R.R."/>
            <person name="Fowler J."/>
            <person name="Hinnebusch J."/>
            <person name="Marceau M."/>
            <person name="Medigue C."/>
            <person name="Simonet M."/>
            <person name="Chenal-Francisque V."/>
            <person name="Souza B."/>
            <person name="Dacheux D."/>
            <person name="Elliott J.M."/>
            <person name="Derbise A."/>
            <person name="Hauser L.J."/>
            <person name="Garcia E."/>
        </authorList>
    </citation>
    <scope>NUCLEOTIDE SEQUENCE [LARGE SCALE GENOMIC DNA]</scope>
    <source>
        <strain>IP32953</strain>
    </source>
</reference>
<sequence>MAVQQNKPTRSKRGMRRSHDALTTATLSVDKTSGETHLRHHITADGFYRGRKVIG</sequence>
<gene>
    <name evidence="1" type="primary">rpmF</name>
    <name type="ordered locus">YPTB2475</name>
</gene>
<proteinExistence type="inferred from homology"/>